<proteinExistence type="inferred from homology"/>
<keyword id="KW-0521">NADP</keyword>
<keyword id="KW-0560">Oxidoreductase</keyword>
<keyword id="KW-0627">Porphyrin biosynthesis</keyword>
<name>HEM1_STAAS</name>
<protein>
    <recommendedName>
        <fullName evidence="1">Glutamyl-tRNA reductase</fullName>
        <shortName evidence="1">GluTR</shortName>
        <ecNumber evidence="1">1.2.1.70</ecNumber>
    </recommendedName>
</protein>
<gene>
    <name evidence="1" type="primary">hemA</name>
    <name type="ordered locus">SAS1601</name>
</gene>
<feature type="chain" id="PRO_0000114071" description="Glutamyl-tRNA reductase">
    <location>
        <begin position="1"/>
        <end position="448"/>
    </location>
</feature>
<feature type="active site" description="Nucleophile" evidence="1">
    <location>
        <position position="50"/>
    </location>
</feature>
<feature type="binding site" evidence="1">
    <location>
        <begin position="49"/>
        <end position="52"/>
    </location>
    <ligand>
        <name>substrate</name>
    </ligand>
</feature>
<feature type="binding site" evidence="1">
    <location>
        <position position="109"/>
    </location>
    <ligand>
        <name>substrate</name>
    </ligand>
</feature>
<feature type="binding site" evidence="1">
    <location>
        <begin position="114"/>
        <end position="116"/>
    </location>
    <ligand>
        <name>substrate</name>
    </ligand>
</feature>
<feature type="binding site" evidence="1">
    <location>
        <position position="120"/>
    </location>
    <ligand>
        <name>substrate</name>
    </ligand>
</feature>
<feature type="binding site" evidence="1">
    <location>
        <begin position="189"/>
        <end position="194"/>
    </location>
    <ligand>
        <name>NADP(+)</name>
        <dbReference type="ChEBI" id="CHEBI:58349"/>
    </ligand>
</feature>
<feature type="site" description="Important for activity" evidence="1">
    <location>
        <position position="99"/>
    </location>
</feature>
<organism>
    <name type="scientific">Staphylococcus aureus (strain MSSA476)</name>
    <dbReference type="NCBI Taxonomy" id="282459"/>
    <lineage>
        <taxon>Bacteria</taxon>
        <taxon>Bacillati</taxon>
        <taxon>Bacillota</taxon>
        <taxon>Bacilli</taxon>
        <taxon>Bacillales</taxon>
        <taxon>Staphylococcaceae</taxon>
        <taxon>Staphylococcus</taxon>
    </lineage>
</organism>
<dbReference type="EC" id="1.2.1.70" evidence="1"/>
<dbReference type="EMBL" id="BX571857">
    <property type="protein sequence ID" value="CAG43403.1"/>
    <property type="molecule type" value="Genomic_DNA"/>
</dbReference>
<dbReference type="RefSeq" id="WP_000545451.1">
    <property type="nucleotide sequence ID" value="NC_002953.3"/>
</dbReference>
<dbReference type="SMR" id="Q6G8Q3"/>
<dbReference type="KEGG" id="sas:SAS1601"/>
<dbReference type="HOGENOM" id="CLU_035113_2_2_9"/>
<dbReference type="UniPathway" id="UPA00251">
    <property type="reaction ID" value="UER00316"/>
</dbReference>
<dbReference type="GO" id="GO:0008883">
    <property type="term" value="F:glutamyl-tRNA reductase activity"/>
    <property type="evidence" value="ECO:0007669"/>
    <property type="project" value="UniProtKB-UniRule"/>
</dbReference>
<dbReference type="GO" id="GO:0050661">
    <property type="term" value="F:NADP binding"/>
    <property type="evidence" value="ECO:0007669"/>
    <property type="project" value="InterPro"/>
</dbReference>
<dbReference type="GO" id="GO:0006782">
    <property type="term" value="P:protoporphyrinogen IX biosynthetic process"/>
    <property type="evidence" value="ECO:0007669"/>
    <property type="project" value="UniProtKB-UniRule"/>
</dbReference>
<dbReference type="CDD" id="cd05213">
    <property type="entry name" value="NAD_bind_Glutamyl_tRNA_reduct"/>
    <property type="match status" value="1"/>
</dbReference>
<dbReference type="FunFam" id="3.30.460.30:FF:000001">
    <property type="entry name" value="Glutamyl-tRNA reductase"/>
    <property type="match status" value="1"/>
</dbReference>
<dbReference type="FunFam" id="3.40.50.720:FF:000031">
    <property type="entry name" value="Glutamyl-tRNA reductase"/>
    <property type="match status" value="1"/>
</dbReference>
<dbReference type="Gene3D" id="3.30.460.30">
    <property type="entry name" value="Glutamyl-tRNA reductase, N-terminal domain"/>
    <property type="match status" value="1"/>
</dbReference>
<dbReference type="Gene3D" id="3.40.50.720">
    <property type="entry name" value="NAD(P)-binding Rossmann-like Domain"/>
    <property type="match status" value="1"/>
</dbReference>
<dbReference type="HAMAP" id="MF_00087">
    <property type="entry name" value="Glu_tRNA_reductase"/>
    <property type="match status" value="1"/>
</dbReference>
<dbReference type="InterPro" id="IPR000343">
    <property type="entry name" value="4pyrrol_synth_GluRdtase"/>
</dbReference>
<dbReference type="InterPro" id="IPR015896">
    <property type="entry name" value="4pyrrol_synth_GluRdtase_dimer"/>
</dbReference>
<dbReference type="InterPro" id="IPR015895">
    <property type="entry name" value="4pyrrol_synth_GluRdtase_N"/>
</dbReference>
<dbReference type="InterPro" id="IPR018214">
    <property type="entry name" value="GluRdtase_CS"/>
</dbReference>
<dbReference type="InterPro" id="IPR036453">
    <property type="entry name" value="GluRdtase_dimer_dom_sf"/>
</dbReference>
<dbReference type="InterPro" id="IPR036343">
    <property type="entry name" value="GluRdtase_N_sf"/>
</dbReference>
<dbReference type="InterPro" id="IPR036291">
    <property type="entry name" value="NAD(P)-bd_dom_sf"/>
</dbReference>
<dbReference type="InterPro" id="IPR006151">
    <property type="entry name" value="Shikm_DH/Glu-tRNA_Rdtase"/>
</dbReference>
<dbReference type="NCBIfam" id="TIGR01035">
    <property type="entry name" value="hemA"/>
    <property type="match status" value="1"/>
</dbReference>
<dbReference type="PANTHER" id="PTHR43120">
    <property type="entry name" value="GLUTAMYL-TRNA REDUCTASE 1, CHLOROPLASTIC"/>
    <property type="match status" value="1"/>
</dbReference>
<dbReference type="PANTHER" id="PTHR43120:SF1">
    <property type="entry name" value="GLUTAMYL-TRNA REDUCTASE 1, CHLOROPLASTIC"/>
    <property type="match status" value="1"/>
</dbReference>
<dbReference type="Pfam" id="PF00745">
    <property type="entry name" value="GlutR_dimer"/>
    <property type="match status" value="1"/>
</dbReference>
<dbReference type="Pfam" id="PF05201">
    <property type="entry name" value="GlutR_N"/>
    <property type="match status" value="1"/>
</dbReference>
<dbReference type="Pfam" id="PF01488">
    <property type="entry name" value="Shikimate_DH"/>
    <property type="match status" value="1"/>
</dbReference>
<dbReference type="PIRSF" id="PIRSF000445">
    <property type="entry name" value="4pyrrol_synth_GluRdtase"/>
    <property type="match status" value="1"/>
</dbReference>
<dbReference type="SUPFAM" id="SSF69742">
    <property type="entry name" value="Glutamyl tRNA-reductase catalytic, N-terminal domain"/>
    <property type="match status" value="1"/>
</dbReference>
<dbReference type="SUPFAM" id="SSF69075">
    <property type="entry name" value="Glutamyl tRNA-reductase dimerization domain"/>
    <property type="match status" value="1"/>
</dbReference>
<dbReference type="SUPFAM" id="SSF51735">
    <property type="entry name" value="NAD(P)-binding Rossmann-fold domains"/>
    <property type="match status" value="1"/>
</dbReference>
<dbReference type="PROSITE" id="PS00747">
    <property type="entry name" value="GLUTR"/>
    <property type="match status" value="1"/>
</dbReference>
<comment type="function">
    <text evidence="1">Catalyzes the NADPH-dependent reduction of glutamyl-tRNA(Glu) to glutamate 1-semialdehyde (GSA).</text>
</comment>
<comment type="catalytic activity">
    <reaction evidence="1">
        <text>(S)-4-amino-5-oxopentanoate + tRNA(Glu) + NADP(+) = L-glutamyl-tRNA(Glu) + NADPH + H(+)</text>
        <dbReference type="Rhea" id="RHEA:12344"/>
        <dbReference type="Rhea" id="RHEA-COMP:9663"/>
        <dbReference type="Rhea" id="RHEA-COMP:9680"/>
        <dbReference type="ChEBI" id="CHEBI:15378"/>
        <dbReference type="ChEBI" id="CHEBI:57501"/>
        <dbReference type="ChEBI" id="CHEBI:57783"/>
        <dbReference type="ChEBI" id="CHEBI:58349"/>
        <dbReference type="ChEBI" id="CHEBI:78442"/>
        <dbReference type="ChEBI" id="CHEBI:78520"/>
        <dbReference type="EC" id="1.2.1.70"/>
    </reaction>
</comment>
<comment type="pathway">
    <text evidence="1">Porphyrin-containing compound metabolism; protoporphyrin-IX biosynthesis; 5-aminolevulinate from L-glutamyl-tRNA(Glu): step 1/2.</text>
</comment>
<comment type="subunit">
    <text evidence="1">Homodimer.</text>
</comment>
<comment type="domain">
    <text evidence="1">Possesses an unusual extended V-shaped dimeric structure with each monomer consisting of three distinct domains arranged along a curved 'spinal' alpha-helix. The N-terminal catalytic domain specifically recognizes the glutamate moiety of the substrate. The second domain is the NADPH-binding domain, and the third C-terminal domain is responsible for dimerization.</text>
</comment>
<comment type="miscellaneous">
    <text evidence="1">During catalysis, the active site Cys acts as a nucleophile attacking the alpha-carbonyl group of tRNA-bound glutamate with the formation of a thioester intermediate between enzyme and glutamate, and the concomitant release of tRNA(Glu). The thioester intermediate is finally reduced by direct hydride transfer from NADPH, to form the product GSA.</text>
</comment>
<comment type="similarity">
    <text evidence="1">Belongs to the glutamyl-tRNA reductase family.</text>
</comment>
<evidence type="ECO:0000255" key="1">
    <source>
        <dbReference type="HAMAP-Rule" id="MF_00087"/>
    </source>
</evidence>
<sequence>MHFIAISINHRTADVALREQVAFRDDALRIAHEDLYETKSILENVILSTCNRTEVYAVVDQIHTGRYYIQRFLARAFGFEVDDIKAMSEVKVGDEAVEHLLRVTSGLDSIVLGETQILGQIRDAFFLAQSTGTTGTIFNHLFKQAITFAKRAHNETDIADNAVSVSYAAVELAKKVFGKLKSKQAIIIGAGEMSELSLLNLLGSGITDITVVNRTIENAMKLAAKHQVKYDELSSLPNLLESADIVISSTSAQSYIITNEMIERIAENRKQDSLVLIDIAVPRDIEPGISAITNIFNYDVDDLKGLVDANLRERQLAAATISEQIPAEIHAHNEWISMLGVVPVIRALREKAMAIQAETMDSIDRKLPGLSERERKIISKHTKSIINQMLKDPIKQAKELSSDKKSNEKLELFQNIFDIEAECPHEQAKQQKESKVKEISARRIFSFE</sequence>
<accession>Q6G8Q3</accession>
<reference key="1">
    <citation type="journal article" date="2004" name="Proc. Natl. Acad. Sci. U.S.A.">
        <title>Complete genomes of two clinical Staphylococcus aureus strains: evidence for the rapid evolution of virulence and drug resistance.</title>
        <authorList>
            <person name="Holden M.T.G."/>
            <person name="Feil E.J."/>
            <person name="Lindsay J.A."/>
            <person name="Peacock S.J."/>
            <person name="Day N.P.J."/>
            <person name="Enright M.C."/>
            <person name="Foster T.J."/>
            <person name="Moore C.E."/>
            <person name="Hurst L."/>
            <person name="Atkin R."/>
            <person name="Barron A."/>
            <person name="Bason N."/>
            <person name="Bentley S.D."/>
            <person name="Chillingworth C."/>
            <person name="Chillingworth T."/>
            <person name="Churcher C."/>
            <person name="Clark L."/>
            <person name="Corton C."/>
            <person name="Cronin A."/>
            <person name="Doggett J."/>
            <person name="Dowd L."/>
            <person name="Feltwell T."/>
            <person name="Hance Z."/>
            <person name="Harris B."/>
            <person name="Hauser H."/>
            <person name="Holroyd S."/>
            <person name="Jagels K."/>
            <person name="James K.D."/>
            <person name="Lennard N."/>
            <person name="Line A."/>
            <person name="Mayes R."/>
            <person name="Moule S."/>
            <person name="Mungall K."/>
            <person name="Ormond D."/>
            <person name="Quail M.A."/>
            <person name="Rabbinowitsch E."/>
            <person name="Rutherford K.M."/>
            <person name="Sanders M."/>
            <person name="Sharp S."/>
            <person name="Simmonds M."/>
            <person name="Stevens K."/>
            <person name="Whitehead S."/>
            <person name="Barrell B.G."/>
            <person name="Spratt B.G."/>
            <person name="Parkhill J."/>
        </authorList>
    </citation>
    <scope>NUCLEOTIDE SEQUENCE [LARGE SCALE GENOMIC DNA]</scope>
    <source>
        <strain>MSSA476</strain>
    </source>
</reference>